<reference key="1">
    <citation type="submission" date="2000-06" db="EMBL/GenBank/DDBJ databases">
        <title>Genetic and molecular characterization of mating type genes in Cochliobolus sativus.</title>
        <authorList>
            <person name="Zhong S."/>
            <person name="Steffenson B.J."/>
        </authorList>
    </citation>
    <scope>NUCLEOTIDE SEQUENCE [GENOMIC DNA]</scope>
</reference>
<comment type="function">
    <text evidence="1">Mating type proteins are sequence specific DNA-binding proteins that act as master switches in fungal differentiation by controlling gene expression in a cell type-specific fashion. Transcriptional activator that induces the transcription of alpha-specific genes.</text>
</comment>
<comment type="subcellular location">
    <subcellularLocation>
        <location evidence="2">Nucleus</location>
    </subcellularLocation>
</comment>
<comment type="similarity">
    <text evidence="2">Belongs to the MATALPHA1 family.</text>
</comment>
<evidence type="ECO:0000250" key="1">
    <source>
        <dbReference type="UniProtKB" id="P0CY06"/>
    </source>
</evidence>
<evidence type="ECO:0000255" key="2">
    <source>
        <dbReference type="PROSITE-ProRule" id="PRU00655"/>
    </source>
</evidence>
<dbReference type="EMBL" id="AF275373">
    <property type="protein sequence ID" value="AAF87723.1"/>
    <property type="molecule type" value="Genomic_DNA"/>
</dbReference>
<dbReference type="SMR" id="Q9P446"/>
<dbReference type="GO" id="GO:0005634">
    <property type="term" value="C:nucleus"/>
    <property type="evidence" value="ECO:0007669"/>
    <property type="project" value="UniProtKB-SubCell"/>
</dbReference>
<dbReference type="GO" id="GO:0008301">
    <property type="term" value="F:DNA binding, bending"/>
    <property type="evidence" value="ECO:0007669"/>
    <property type="project" value="InterPro"/>
</dbReference>
<dbReference type="GO" id="GO:0045895">
    <property type="term" value="P:positive regulation of mating-type specific transcription, DNA-templated"/>
    <property type="evidence" value="ECO:0007669"/>
    <property type="project" value="InterPro"/>
</dbReference>
<dbReference type="GO" id="GO:0007338">
    <property type="term" value="P:single fertilization"/>
    <property type="evidence" value="ECO:0007669"/>
    <property type="project" value="UniProtKB-KW"/>
</dbReference>
<dbReference type="InterPro" id="IPR006856">
    <property type="entry name" value="MATalpha_HMGbox"/>
</dbReference>
<dbReference type="Pfam" id="PF04769">
    <property type="entry name" value="MATalpha_HMGbox"/>
    <property type="match status" value="1"/>
</dbReference>
<dbReference type="PROSITE" id="PS51325">
    <property type="entry name" value="ALPHA_BOX"/>
    <property type="match status" value="1"/>
</dbReference>
<accession>Q9P446</accession>
<keyword id="KW-0238">DNA-binding</keyword>
<keyword id="KW-0278">Fertilization</keyword>
<keyword id="KW-0539">Nucleus</keyword>
<keyword id="KW-0804">Transcription</keyword>
<keyword id="KW-0805">Transcription regulation</keyword>
<proteinExistence type="inferred from homology"/>
<sequence>MALARDPTGAEIARFIATRTGAQMVQLMRCIKEPAAQAAFTAKLLVAPPAMSGRPATPEKARKALNAFVGFRCYYITIPMFKPWPMKKLSNLIGLLWEADPNKSLWSLMAKPWSTIRDQIGKDQAPLDQFFRIICPHLKLPDPASYLEIHGWTLAVNEEGDPIISRSADSEFASVGTGNTDMAISVEDIITYGQSLGYAHGFILDNKPSSTFLGQSVSSTLEKNISAISITEGTSKAAHARFLIRNKRRAKRQTLRNAGYRASLDQDILNGHQLDPAPVDENMPDCYSTTAPVLDQSPNKFYGGLTTLLSDQISTGQGDADHLDNAYLFNDCSLSGNAPFMTIAGFTTNMPNLTDYGAFRLGADEDVTLPIFDDITHI</sequence>
<organism>
    <name type="scientific">Cochliobolus sativus</name>
    <name type="common">Common root rot and spot blotch fungus</name>
    <name type="synonym">Bipolaris sorokiniana</name>
    <dbReference type="NCBI Taxonomy" id="45130"/>
    <lineage>
        <taxon>Eukaryota</taxon>
        <taxon>Fungi</taxon>
        <taxon>Dikarya</taxon>
        <taxon>Ascomycota</taxon>
        <taxon>Pezizomycotina</taxon>
        <taxon>Dothideomycetes</taxon>
        <taxon>Pleosporomycetidae</taxon>
        <taxon>Pleosporales</taxon>
        <taxon>Pleosporineae</taxon>
        <taxon>Pleosporaceae</taxon>
        <taxon>Bipolaris</taxon>
    </lineage>
</organism>
<protein>
    <recommendedName>
        <fullName>Mating-type protein MAT-1</fullName>
    </recommendedName>
</protein>
<name>MAT1_COCSA</name>
<feature type="chain" id="PRO_0000206014" description="Mating-type protein MAT-1">
    <location>
        <begin position="1"/>
        <end position="378"/>
    </location>
</feature>
<feature type="DNA-binding region" description="Alpha box" evidence="2">
    <location>
        <begin position="60"/>
        <end position="117"/>
    </location>
</feature>
<gene>
    <name type="primary">MAT1</name>
</gene>